<keyword id="KW-0119">Carbohydrate metabolism</keyword>
<keyword id="KW-0963">Cytoplasm</keyword>
<keyword id="KW-0903">Direct protein sequencing</keyword>
<keyword id="KW-0313">Glucose metabolism</keyword>
<keyword id="KW-0413">Isomerase</keyword>
<keyword id="KW-0460">Magnesium</keyword>
<keyword id="KW-0479">Metal-binding</keyword>
<keyword id="KW-0597">Phosphoprotein</keyword>
<keyword id="KW-1185">Reference proteome</keyword>
<keyword id="KW-0808">Transferase</keyword>
<feature type="chain" id="PRO_0000147785" description="Glucose 1,6-bisphosphate synthase">
    <location>
        <begin position="1"/>
        <end position="621"/>
    </location>
</feature>
<feature type="active site" description="Phosphoserine intermediate" evidence="1">
    <location>
        <position position="175"/>
    </location>
</feature>
<feature type="binding site" evidence="1">
    <location>
        <position position="73"/>
    </location>
    <ligand>
        <name>alpha-D-glucose 1,6-bisphosphate</name>
        <dbReference type="ChEBI" id="CHEBI:58392"/>
    </ligand>
</feature>
<feature type="binding site" evidence="1">
    <location>
        <position position="175"/>
    </location>
    <ligand>
        <name>alpha-D-glucose 1,6-bisphosphate</name>
        <dbReference type="ChEBI" id="CHEBI:58392"/>
    </ligand>
</feature>
<feature type="binding site" description="via phosphate group" evidence="1">
    <location>
        <position position="175"/>
    </location>
    <ligand>
        <name>Mg(2+)</name>
        <dbReference type="ChEBI" id="CHEBI:18420"/>
    </ligand>
</feature>
<feature type="binding site" evidence="1">
    <location>
        <position position="332"/>
    </location>
    <ligand>
        <name>Mg(2+)</name>
        <dbReference type="ChEBI" id="CHEBI:18420"/>
    </ligand>
</feature>
<feature type="binding site" evidence="1">
    <location>
        <position position="334"/>
    </location>
    <ligand>
        <name>Mg(2+)</name>
        <dbReference type="ChEBI" id="CHEBI:18420"/>
    </ligand>
</feature>
<feature type="binding site" evidence="1">
    <location>
        <position position="336"/>
    </location>
    <ligand>
        <name>alpha-D-glucose 1,6-bisphosphate</name>
        <dbReference type="ChEBI" id="CHEBI:58392"/>
    </ligand>
</feature>
<feature type="binding site" evidence="1">
    <location>
        <position position="336"/>
    </location>
    <ligand>
        <name>Mg(2+)</name>
        <dbReference type="ChEBI" id="CHEBI:18420"/>
    </ligand>
</feature>
<feature type="binding site" evidence="1">
    <location>
        <position position="337"/>
    </location>
    <ligand>
        <name>alpha-D-glucose 1,6-bisphosphate</name>
        <dbReference type="ChEBI" id="CHEBI:58392"/>
    </ligand>
</feature>
<feature type="binding site" evidence="1">
    <location>
        <position position="433"/>
    </location>
    <ligand>
        <name>alpha-D-glucose 1,6-bisphosphate</name>
        <dbReference type="ChEBI" id="CHEBI:58392"/>
    </ligand>
</feature>
<feature type="binding site" evidence="1">
    <location>
        <position position="435"/>
    </location>
    <ligand>
        <name>alpha-D-glucose 1,6-bisphosphate</name>
        <dbReference type="ChEBI" id="CHEBI:58392"/>
    </ligand>
</feature>
<feature type="binding site" evidence="1">
    <location>
        <position position="447"/>
    </location>
    <ligand>
        <name>alpha-D-glucose 1,6-bisphosphate</name>
        <dbReference type="ChEBI" id="CHEBI:58392"/>
    </ligand>
</feature>
<feature type="modified residue" description="Phosphoserine" evidence="6">
    <location>
        <position position="175"/>
    </location>
</feature>
<accession>Q8CAA7</accession>
<gene>
    <name evidence="5" type="primary">Pgm2l1</name>
</gene>
<organism>
    <name type="scientific">Mus musculus</name>
    <name type="common">Mouse</name>
    <dbReference type="NCBI Taxonomy" id="10090"/>
    <lineage>
        <taxon>Eukaryota</taxon>
        <taxon>Metazoa</taxon>
        <taxon>Chordata</taxon>
        <taxon>Craniata</taxon>
        <taxon>Vertebrata</taxon>
        <taxon>Euteleostomi</taxon>
        <taxon>Mammalia</taxon>
        <taxon>Eutheria</taxon>
        <taxon>Euarchontoglires</taxon>
        <taxon>Glires</taxon>
        <taxon>Rodentia</taxon>
        <taxon>Myomorpha</taxon>
        <taxon>Muroidea</taxon>
        <taxon>Muridae</taxon>
        <taxon>Murinae</taxon>
        <taxon>Mus</taxon>
        <taxon>Mus</taxon>
    </lineage>
</organism>
<proteinExistence type="evidence at protein level"/>
<reference key="1">
    <citation type="journal article" date="2005" name="Science">
        <title>The transcriptional landscape of the mammalian genome.</title>
        <authorList>
            <person name="Carninci P."/>
            <person name="Kasukawa T."/>
            <person name="Katayama S."/>
            <person name="Gough J."/>
            <person name="Frith M.C."/>
            <person name="Maeda N."/>
            <person name="Oyama R."/>
            <person name="Ravasi T."/>
            <person name="Lenhard B."/>
            <person name="Wells C."/>
            <person name="Kodzius R."/>
            <person name="Shimokawa K."/>
            <person name="Bajic V.B."/>
            <person name="Brenner S.E."/>
            <person name="Batalov S."/>
            <person name="Forrest A.R."/>
            <person name="Zavolan M."/>
            <person name="Davis M.J."/>
            <person name="Wilming L.G."/>
            <person name="Aidinis V."/>
            <person name="Allen J.E."/>
            <person name="Ambesi-Impiombato A."/>
            <person name="Apweiler R."/>
            <person name="Aturaliya R.N."/>
            <person name="Bailey T.L."/>
            <person name="Bansal M."/>
            <person name="Baxter L."/>
            <person name="Beisel K.W."/>
            <person name="Bersano T."/>
            <person name="Bono H."/>
            <person name="Chalk A.M."/>
            <person name="Chiu K.P."/>
            <person name="Choudhary V."/>
            <person name="Christoffels A."/>
            <person name="Clutterbuck D.R."/>
            <person name="Crowe M.L."/>
            <person name="Dalla E."/>
            <person name="Dalrymple B.P."/>
            <person name="de Bono B."/>
            <person name="Della Gatta G."/>
            <person name="di Bernardo D."/>
            <person name="Down T."/>
            <person name="Engstrom P."/>
            <person name="Fagiolini M."/>
            <person name="Faulkner G."/>
            <person name="Fletcher C.F."/>
            <person name="Fukushima T."/>
            <person name="Furuno M."/>
            <person name="Futaki S."/>
            <person name="Gariboldi M."/>
            <person name="Georgii-Hemming P."/>
            <person name="Gingeras T.R."/>
            <person name="Gojobori T."/>
            <person name="Green R.E."/>
            <person name="Gustincich S."/>
            <person name="Harbers M."/>
            <person name="Hayashi Y."/>
            <person name="Hensch T.K."/>
            <person name="Hirokawa N."/>
            <person name="Hill D."/>
            <person name="Huminiecki L."/>
            <person name="Iacono M."/>
            <person name="Ikeo K."/>
            <person name="Iwama A."/>
            <person name="Ishikawa T."/>
            <person name="Jakt M."/>
            <person name="Kanapin A."/>
            <person name="Katoh M."/>
            <person name="Kawasawa Y."/>
            <person name="Kelso J."/>
            <person name="Kitamura H."/>
            <person name="Kitano H."/>
            <person name="Kollias G."/>
            <person name="Krishnan S.P."/>
            <person name="Kruger A."/>
            <person name="Kummerfeld S.K."/>
            <person name="Kurochkin I.V."/>
            <person name="Lareau L.F."/>
            <person name="Lazarevic D."/>
            <person name="Lipovich L."/>
            <person name="Liu J."/>
            <person name="Liuni S."/>
            <person name="McWilliam S."/>
            <person name="Madan Babu M."/>
            <person name="Madera M."/>
            <person name="Marchionni L."/>
            <person name="Matsuda H."/>
            <person name="Matsuzawa S."/>
            <person name="Miki H."/>
            <person name="Mignone F."/>
            <person name="Miyake S."/>
            <person name="Morris K."/>
            <person name="Mottagui-Tabar S."/>
            <person name="Mulder N."/>
            <person name="Nakano N."/>
            <person name="Nakauchi H."/>
            <person name="Ng P."/>
            <person name="Nilsson R."/>
            <person name="Nishiguchi S."/>
            <person name="Nishikawa S."/>
            <person name="Nori F."/>
            <person name="Ohara O."/>
            <person name="Okazaki Y."/>
            <person name="Orlando V."/>
            <person name="Pang K.C."/>
            <person name="Pavan W.J."/>
            <person name="Pavesi G."/>
            <person name="Pesole G."/>
            <person name="Petrovsky N."/>
            <person name="Piazza S."/>
            <person name="Reed J."/>
            <person name="Reid J.F."/>
            <person name="Ring B.Z."/>
            <person name="Ringwald M."/>
            <person name="Rost B."/>
            <person name="Ruan Y."/>
            <person name="Salzberg S.L."/>
            <person name="Sandelin A."/>
            <person name="Schneider C."/>
            <person name="Schoenbach C."/>
            <person name="Sekiguchi K."/>
            <person name="Semple C.A."/>
            <person name="Seno S."/>
            <person name="Sessa L."/>
            <person name="Sheng Y."/>
            <person name="Shibata Y."/>
            <person name="Shimada H."/>
            <person name="Shimada K."/>
            <person name="Silva D."/>
            <person name="Sinclair B."/>
            <person name="Sperling S."/>
            <person name="Stupka E."/>
            <person name="Sugiura K."/>
            <person name="Sultana R."/>
            <person name="Takenaka Y."/>
            <person name="Taki K."/>
            <person name="Tammoja K."/>
            <person name="Tan S.L."/>
            <person name="Tang S."/>
            <person name="Taylor M.S."/>
            <person name="Tegner J."/>
            <person name="Teichmann S.A."/>
            <person name="Ueda H.R."/>
            <person name="van Nimwegen E."/>
            <person name="Verardo R."/>
            <person name="Wei C.L."/>
            <person name="Yagi K."/>
            <person name="Yamanishi H."/>
            <person name="Zabarovsky E."/>
            <person name="Zhu S."/>
            <person name="Zimmer A."/>
            <person name="Hide W."/>
            <person name="Bult C."/>
            <person name="Grimmond S.M."/>
            <person name="Teasdale R.D."/>
            <person name="Liu E.T."/>
            <person name="Brusic V."/>
            <person name="Quackenbush J."/>
            <person name="Wahlestedt C."/>
            <person name="Mattick J.S."/>
            <person name="Hume D.A."/>
            <person name="Kai C."/>
            <person name="Sasaki D."/>
            <person name="Tomaru Y."/>
            <person name="Fukuda S."/>
            <person name="Kanamori-Katayama M."/>
            <person name="Suzuki M."/>
            <person name="Aoki J."/>
            <person name="Arakawa T."/>
            <person name="Iida J."/>
            <person name="Imamura K."/>
            <person name="Itoh M."/>
            <person name="Kato T."/>
            <person name="Kawaji H."/>
            <person name="Kawagashira N."/>
            <person name="Kawashima T."/>
            <person name="Kojima M."/>
            <person name="Kondo S."/>
            <person name="Konno H."/>
            <person name="Nakano K."/>
            <person name="Ninomiya N."/>
            <person name="Nishio T."/>
            <person name="Okada M."/>
            <person name="Plessy C."/>
            <person name="Shibata K."/>
            <person name="Shiraki T."/>
            <person name="Suzuki S."/>
            <person name="Tagami M."/>
            <person name="Waki K."/>
            <person name="Watahiki A."/>
            <person name="Okamura-Oho Y."/>
            <person name="Suzuki H."/>
            <person name="Kawai J."/>
            <person name="Hayashizaki Y."/>
        </authorList>
    </citation>
    <scope>NUCLEOTIDE SEQUENCE [LARGE SCALE MRNA]</scope>
    <source>
        <strain>C57BL/6J</strain>
        <tissue>Hypothalamus</tissue>
    </source>
</reference>
<reference key="2">
    <citation type="journal article" date="2004" name="Genome Res.">
        <title>The status, quality, and expansion of the NIH full-length cDNA project: the Mammalian Gene Collection (MGC).</title>
        <authorList>
            <consortium name="The MGC Project Team"/>
        </authorList>
    </citation>
    <scope>NUCLEOTIDE SEQUENCE [LARGE SCALE MRNA]</scope>
    <source>
        <strain>C57BL/6J</strain>
        <tissue>Brain</tissue>
    </source>
</reference>
<reference key="3">
    <citation type="submission" date="2007-04" db="UniProtKB">
        <authorList>
            <person name="Lubec G."/>
            <person name="Kang S.U."/>
        </authorList>
    </citation>
    <scope>PROTEIN SEQUENCE OF 142-150 AND 600-613</scope>
    <scope>IDENTIFICATION BY MASS SPECTROMETRY</scope>
    <source>
        <strain>C57BL/6J</strain>
        <tissue>Brain</tissue>
    </source>
</reference>
<reference key="4">
    <citation type="journal article" date="2007" name="J. Biol. Chem.">
        <title>Molecular identification of mammalian phosphopentomutase and glucose-1,6-bisphosphate synthase, two members of the alpha-D-phosphohexomutase family.</title>
        <authorList>
            <person name="Maliekal P."/>
            <person name="Sokolova T."/>
            <person name="Vertommen D."/>
            <person name="Veiga-da-Cunha M."/>
            <person name="Van Schaftingen E."/>
        </authorList>
    </citation>
    <scope>TISSUE SPECIFICITY</scope>
</reference>
<reference key="5">
    <citation type="journal article" date="2010" name="Cell">
        <title>A tissue-specific atlas of mouse protein phosphorylation and expression.</title>
        <authorList>
            <person name="Huttlin E.L."/>
            <person name="Jedrychowski M.P."/>
            <person name="Elias J.E."/>
            <person name="Goswami T."/>
            <person name="Rad R."/>
            <person name="Beausoleil S.A."/>
            <person name="Villen J."/>
            <person name="Haas W."/>
            <person name="Sowa M.E."/>
            <person name="Gygi S.P."/>
        </authorList>
    </citation>
    <scope>PHOSPHORYLATION [LARGE SCALE ANALYSIS] AT SER-175</scope>
    <scope>IDENTIFICATION BY MASS SPECTROMETRY [LARGE SCALE ANALYSIS]</scope>
    <source>
        <tissue>Brain</tissue>
        <tissue>Brown adipose tissue</tissue>
        <tissue>Heart</tissue>
        <tissue>Kidney</tissue>
        <tissue>Lung</tissue>
        <tissue>Spleen</tissue>
        <tissue>Testis</tissue>
    </source>
</reference>
<name>PGM2L_MOUSE</name>
<comment type="function">
    <text evidence="2">Glucose 1,6-bisphosphate synthase using 1,3-bisphosphoglycerate as a phosphate donor and a series of 1-phosphate sugars, including glucose 1-phosphate, mannose 1-phosphate, ribose 1-phosphate and deoxyribose 1-phosphate, as acceptors. In vitro, also exhibits very low phosphopentomutase and phosphoglucomutase activity which are most probably not physiologically relevant.</text>
</comment>
<comment type="catalytic activity">
    <reaction evidence="2">
        <text>(2R)-3-phospho-glyceroyl phosphate + alpha-D-glucose 1-phosphate = alpha-D-glucose 1,6-bisphosphate + (2R)-3-phosphoglycerate + H(+)</text>
        <dbReference type="Rhea" id="RHEA:16769"/>
        <dbReference type="ChEBI" id="CHEBI:15378"/>
        <dbReference type="ChEBI" id="CHEBI:57604"/>
        <dbReference type="ChEBI" id="CHEBI:58272"/>
        <dbReference type="ChEBI" id="CHEBI:58392"/>
        <dbReference type="ChEBI" id="CHEBI:58601"/>
        <dbReference type="EC" id="2.7.1.106"/>
    </reaction>
    <physiologicalReaction direction="left-to-right" evidence="2">
        <dbReference type="Rhea" id="RHEA:16770"/>
    </physiologicalReaction>
</comment>
<comment type="catalytic activity">
    <reaction evidence="2">
        <text>alpha-D-glucose 6-phosphate + (2R)-3-phospho-glyceroyl phosphate = alpha-D-glucose 1,6-bisphosphate + (2R)-3-phosphoglycerate + H(+)</text>
        <dbReference type="Rhea" id="RHEA:70911"/>
        <dbReference type="ChEBI" id="CHEBI:15378"/>
        <dbReference type="ChEBI" id="CHEBI:57604"/>
        <dbReference type="ChEBI" id="CHEBI:58225"/>
        <dbReference type="ChEBI" id="CHEBI:58272"/>
        <dbReference type="ChEBI" id="CHEBI:58392"/>
    </reaction>
    <physiologicalReaction direction="left-to-right" evidence="2">
        <dbReference type="Rhea" id="RHEA:70912"/>
    </physiologicalReaction>
</comment>
<comment type="catalytic activity">
    <reaction evidence="2">
        <text>(2R)-3-phospho-glyceroyl phosphate + alpha-D-ribose 1-phosphate = alpha-D-ribose 1,5-bisphosphate + (2R)-3-phosphoglycerate + H(+)</text>
        <dbReference type="Rhea" id="RHEA:70899"/>
        <dbReference type="ChEBI" id="CHEBI:15378"/>
        <dbReference type="ChEBI" id="CHEBI:57604"/>
        <dbReference type="ChEBI" id="CHEBI:57720"/>
        <dbReference type="ChEBI" id="CHEBI:58272"/>
        <dbReference type="ChEBI" id="CHEBI:68688"/>
    </reaction>
    <physiologicalReaction direction="left-to-right" evidence="2">
        <dbReference type="Rhea" id="RHEA:70900"/>
    </physiologicalReaction>
</comment>
<comment type="catalytic activity">
    <reaction evidence="2">
        <text>2-deoxy-alpha-D-ribose 1-phosphate + (2R)-3-phospho-glyceroyl phosphate = 2-deoxy-alpha-D-ribose 1,5-bisphosphate + (2R)-3-phosphoglycerate + H(+)</text>
        <dbReference type="Rhea" id="RHEA:70903"/>
        <dbReference type="ChEBI" id="CHEBI:15378"/>
        <dbReference type="ChEBI" id="CHEBI:57259"/>
        <dbReference type="ChEBI" id="CHEBI:57604"/>
        <dbReference type="ChEBI" id="CHEBI:58272"/>
        <dbReference type="ChEBI" id="CHEBI:190126"/>
    </reaction>
    <physiologicalReaction direction="left-to-right" evidence="2">
        <dbReference type="Rhea" id="RHEA:70904"/>
    </physiologicalReaction>
</comment>
<comment type="catalytic activity">
    <reaction evidence="2">
        <text>(2R)-3-phospho-glyceroyl phosphate + alpha-D-mannose 1-phosphate = alpha-D-mannose 1,6-bisphosphate + (2R)-3-phosphoglycerate + H(+)</text>
        <dbReference type="Rhea" id="RHEA:70907"/>
        <dbReference type="ChEBI" id="CHEBI:15378"/>
        <dbReference type="ChEBI" id="CHEBI:57604"/>
        <dbReference type="ChEBI" id="CHEBI:58272"/>
        <dbReference type="ChEBI" id="CHEBI:58409"/>
        <dbReference type="ChEBI" id="CHEBI:190127"/>
    </reaction>
    <physiologicalReaction direction="left-to-right" evidence="2">
        <dbReference type="Rhea" id="RHEA:70908"/>
    </physiologicalReaction>
</comment>
<comment type="subcellular location">
    <subcellularLocation>
        <location evidence="2">Cytoplasm</location>
        <location evidence="2">Cytosol</location>
    </subcellularLocation>
</comment>
<comment type="tissue specificity">
    <text evidence="3">Expressed at highest levels in the brain and testis, at intermediate levels in thymus, spleen, lung and skeletal muscle, and at lowest levels in kidney, liver and heart.</text>
</comment>
<comment type="similarity">
    <text evidence="4">Belongs to the phosphohexose mutase family.</text>
</comment>
<evidence type="ECO:0000250" key="1">
    <source>
        <dbReference type="UniProtKB" id="P00949"/>
    </source>
</evidence>
<evidence type="ECO:0000250" key="2">
    <source>
        <dbReference type="UniProtKB" id="Q6PCE3"/>
    </source>
</evidence>
<evidence type="ECO:0000269" key="3">
    <source>
    </source>
</evidence>
<evidence type="ECO:0000305" key="4"/>
<evidence type="ECO:0000312" key="5">
    <source>
        <dbReference type="MGI" id="MGI:1918224"/>
    </source>
</evidence>
<evidence type="ECO:0007744" key="6">
    <source>
    </source>
</evidence>
<protein>
    <recommendedName>
        <fullName evidence="4">Glucose 1,6-bisphosphate synthase</fullName>
        <ecNumber evidence="2">2.7.1.106</ecNumber>
    </recommendedName>
    <alternativeName>
        <fullName>Phosphoglucomutase-2-like 1</fullName>
    </alternativeName>
</protein>
<dbReference type="EC" id="2.7.1.106" evidence="2"/>
<dbReference type="EMBL" id="AK039189">
    <property type="protein sequence ID" value="BAC30270.1"/>
    <property type="molecule type" value="mRNA"/>
</dbReference>
<dbReference type="EMBL" id="BC076571">
    <property type="protein sequence ID" value="AAH76571.1"/>
    <property type="molecule type" value="mRNA"/>
</dbReference>
<dbReference type="CCDS" id="CCDS40035.1"/>
<dbReference type="RefSeq" id="NP_081905.1">
    <property type="nucleotide sequence ID" value="NM_027629.3"/>
</dbReference>
<dbReference type="RefSeq" id="XP_006508267.1">
    <property type="nucleotide sequence ID" value="XM_006508204.3"/>
</dbReference>
<dbReference type="RefSeq" id="XP_006508268.1">
    <property type="nucleotide sequence ID" value="XM_006508205.3"/>
</dbReference>
<dbReference type="SMR" id="Q8CAA7"/>
<dbReference type="BioGRID" id="214385">
    <property type="interactions" value="2"/>
</dbReference>
<dbReference type="FunCoup" id="Q8CAA7">
    <property type="interactions" value="734"/>
</dbReference>
<dbReference type="IntAct" id="Q8CAA7">
    <property type="interactions" value="1"/>
</dbReference>
<dbReference type="STRING" id="10090.ENSMUSP00000081998"/>
<dbReference type="GlyGen" id="Q8CAA7">
    <property type="glycosylation" value="1 site, 1 O-linked glycan (1 site)"/>
</dbReference>
<dbReference type="iPTMnet" id="Q8CAA7"/>
<dbReference type="PhosphoSitePlus" id="Q8CAA7"/>
<dbReference type="SwissPalm" id="Q8CAA7"/>
<dbReference type="jPOST" id="Q8CAA7"/>
<dbReference type="PaxDb" id="10090-ENSMUSP00000081998"/>
<dbReference type="PeptideAtlas" id="Q8CAA7"/>
<dbReference type="ProteomicsDB" id="289477"/>
<dbReference type="Pumba" id="Q8CAA7"/>
<dbReference type="Antibodypedia" id="31067">
    <property type="antibodies" value="149 antibodies from 19 providers"/>
</dbReference>
<dbReference type="Ensembl" id="ENSMUST00000054436.9">
    <property type="protein sequence ID" value="ENSMUSP00000054782.9"/>
    <property type="gene ID" value="ENSMUSG00000030729.18"/>
</dbReference>
<dbReference type="Ensembl" id="ENSMUST00000084935.11">
    <property type="protein sequence ID" value="ENSMUSP00000081998.4"/>
    <property type="gene ID" value="ENSMUSG00000030729.18"/>
</dbReference>
<dbReference type="GeneID" id="70974"/>
<dbReference type="KEGG" id="mmu:70974"/>
<dbReference type="UCSC" id="uc012fqa.1">
    <property type="organism name" value="mouse"/>
</dbReference>
<dbReference type="AGR" id="MGI:1918224"/>
<dbReference type="CTD" id="283209"/>
<dbReference type="MGI" id="MGI:1918224">
    <property type="gene designation" value="Pgm2l1"/>
</dbReference>
<dbReference type="VEuPathDB" id="HostDB:ENSMUSG00000030729"/>
<dbReference type="eggNOG" id="KOG1220">
    <property type="taxonomic scope" value="Eukaryota"/>
</dbReference>
<dbReference type="GeneTree" id="ENSGT00940000158353"/>
<dbReference type="HOGENOM" id="CLU_016950_0_1_1"/>
<dbReference type="InParanoid" id="Q8CAA7"/>
<dbReference type="OMA" id="RYKSKEF"/>
<dbReference type="OrthoDB" id="8300170at2759"/>
<dbReference type="PhylomeDB" id="Q8CAA7"/>
<dbReference type="TreeFam" id="TF300692"/>
<dbReference type="Reactome" id="R-MMU-70171">
    <property type="pathway name" value="Glycolysis"/>
</dbReference>
<dbReference type="SABIO-RK" id="Q8CAA7"/>
<dbReference type="BioGRID-ORCS" id="70974">
    <property type="hits" value="1 hit in 76 CRISPR screens"/>
</dbReference>
<dbReference type="ChiTaRS" id="Pgm2l1">
    <property type="organism name" value="mouse"/>
</dbReference>
<dbReference type="PRO" id="PR:Q8CAA7"/>
<dbReference type="Proteomes" id="UP000000589">
    <property type="component" value="Chromosome 7"/>
</dbReference>
<dbReference type="RNAct" id="Q8CAA7">
    <property type="molecule type" value="protein"/>
</dbReference>
<dbReference type="Bgee" id="ENSMUSG00000030729">
    <property type="expression patterns" value="Expressed in otolith organ and 231 other cell types or tissues"/>
</dbReference>
<dbReference type="ExpressionAtlas" id="Q8CAA7">
    <property type="expression patterns" value="baseline and differential"/>
</dbReference>
<dbReference type="GO" id="GO:0005829">
    <property type="term" value="C:cytosol"/>
    <property type="evidence" value="ECO:0007669"/>
    <property type="project" value="UniProtKB-SubCell"/>
</dbReference>
<dbReference type="GO" id="GO:0047933">
    <property type="term" value="F:glucose-1,6-bisphosphate synthase activity"/>
    <property type="evidence" value="ECO:0000250"/>
    <property type="project" value="UniProtKB"/>
</dbReference>
<dbReference type="GO" id="GO:0016868">
    <property type="term" value="F:intramolecular phosphotransferase activity"/>
    <property type="evidence" value="ECO:0007669"/>
    <property type="project" value="InterPro"/>
</dbReference>
<dbReference type="GO" id="GO:0046872">
    <property type="term" value="F:metal ion binding"/>
    <property type="evidence" value="ECO:0007669"/>
    <property type="project" value="UniProtKB-KW"/>
</dbReference>
<dbReference type="GO" id="GO:0006006">
    <property type="term" value="P:glucose metabolic process"/>
    <property type="evidence" value="ECO:0007669"/>
    <property type="project" value="UniProtKB-KW"/>
</dbReference>
<dbReference type="CDD" id="cd05799">
    <property type="entry name" value="PGM2"/>
    <property type="match status" value="1"/>
</dbReference>
<dbReference type="FunFam" id="3.40.120.10:FF:000016">
    <property type="entry name" value="Glucose 1,6-bisphosphate synthase"/>
    <property type="match status" value="1"/>
</dbReference>
<dbReference type="FunFam" id="3.40.120.10:FF:000018">
    <property type="entry name" value="Glucose 1,6-bisphosphate synthase"/>
    <property type="match status" value="1"/>
</dbReference>
<dbReference type="FunFam" id="3.40.120.10:FF:000017">
    <property type="entry name" value="glucose 1,6-bisphosphate synthase"/>
    <property type="match status" value="1"/>
</dbReference>
<dbReference type="Gene3D" id="3.40.120.10">
    <property type="entry name" value="Alpha-D-Glucose-1,6-Bisphosphate, subunit A, domain 3"/>
    <property type="match status" value="3"/>
</dbReference>
<dbReference type="InterPro" id="IPR005844">
    <property type="entry name" value="A-D-PHexomutase_a/b/a-I"/>
</dbReference>
<dbReference type="InterPro" id="IPR016055">
    <property type="entry name" value="A-D-PHexomutase_a/b/a-I/II/III"/>
</dbReference>
<dbReference type="InterPro" id="IPR005845">
    <property type="entry name" value="A-D-PHexomutase_a/b/a-II"/>
</dbReference>
<dbReference type="InterPro" id="IPR005846">
    <property type="entry name" value="A-D-PHexomutase_a/b/a-III"/>
</dbReference>
<dbReference type="InterPro" id="IPR036900">
    <property type="entry name" value="A-D-PHexomutase_C_sf"/>
</dbReference>
<dbReference type="PANTHER" id="PTHR45745:SF2">
    <property type="entry name" value="GLUCOSE 1,6-BISPHOSPHATE SYNTHASE"/>
    <property type="match status" value="1"/>
</dbReference>
<dbReference type="PANTHER" id="PTHR45745">
    <property type="entry name" value="PHOSPHOMANNOMUTASE 45A"/>
    <property type="match status" value="1"/>
</dbReference>
<dbReference type="Pfam" id="PF02878">
    <property type="entry name" value="PGM_PMM_I"/>
    <property type="match status" value="1"/>
</dbReference>
<dbReference type="Pfam" id="PF02879">
    <property type="entry name" value="PGM_PMM_II"/>
    <property type="match status" value="1"/>
</dbReference>
<dbReference type="Pfam" id="PF02880">
    <property type="entry name" value="PGM_PMM_III"/>
    <property type="match status" value="1"/>
</dbReference>
<dbReference type="SUPFAM" id="SSF55957">
    <property type="entry name" value="Phosphoglucomutase, C-terminal domain"/>
    <property type="match status" value="1"/>
</dbReference>
<dbReference type="SUPFAM" id="SSF53738">
    <property type="entry name" value="Phosphoglucomutase, first 3 domains"/>
    <property type="match status" value="3"/>
</dbReference>
<sequence length="621" mass="70279">MAENADDDLNSNLLHAPYLTGDPQLDTAIGQWLRWDKNPKTKEQIENLLRNGMNKELRDRLCCRMTFGTAGLRSAMGAGFCYINDLTVIQSTQGMYKYLERCFSDFKQRGFVVGYDTRGQVTSSCSSQRLAKLTAAVLLAKDIPVYLFSRYVPTPFVPYAVQELKAVAGVMITASHNRKEDNGYKVYWETGAQITSPHDKEILKCIEECVEPWNDSWNDNLVDTSPLKKDPLQDICKKYMEDLKKICFYRDLNSKTTLKFVHTSFHGVGHDYVQLAFQVFGFKPPIPVPEQKDPDPDFSTVKCPNPEEGESVLELSLRLAEKENARIVLATDPDADRLAVAELQENGRWKVFTGNELAALFGWWMFDCWKKNKPNADVKNVYMLATTVSSKILKAIALKEGFHFEETLPGFKWIGSRIKDLLGNGKEVLFAFEESIGFLCGTSVLDKDGVSAAAVVAEMASFLDTRKVTLMEQLTKVYEIYGYHMSKTSYFLCYDPPTIKTIFERIRNFESPKEYPKFCGAFAILHVRDITTGYDSSQPNKKSVLPVSKNSQMITFTFQNGCVATLRTSGTEPKIKYYAEMCASPGQSDTTFLEEELKKLIDALIENFLEPSKNALVWRSV</sequence>